<feature type="chain" id="PRO_0000260536" description="Ribosomal RNA large subunit methyltransferase H">
    <location>
        <begin position="1"/>
        <end position="156"/>
    </location>
</feature>
<feature type="binding site" evidence="1">
    <location>
        <position position="73"/>
    </location>
    <ligand>
        <name>S-adenosyl-L-methionine</name>
        <dbReference type="ChEBI" id="CHEBI:59789"/>
    </ligand>
</feature>
<feature type="binding site" evidence="1">
    <location>
        <position position="104"/>
    </location>
    <ligand>
        <name>S-adenosyl-L-methionine</name>
        <dbReference type="ChEBI" id="CHEBI:59789"/>
    </ligand>
</feature>
<feature type="binding site" evidence="1">
    <location>
        <begin position="123"/>
        <end position="128"/>
    </location>
    <ligand>
        <name>S-adenosyl-L-methionine</name>
        <dbReference type="ChEBI" id="CHEBI:59789"/>
    </ligand>
</feature>
<accession>Q2KYV4</accession>
<sequence length="156" mass="17195">MKLIVAAVGTRMPDWVETAWDDYAKRLPADCALELREIKPEPRTSGKTPAQMMAAEARRIEAALPAGALRIALDERGRDLTTVGLSQQLEKWRGEGRDVAFLVGGPDGLDAQLKASCGGLIRLSSLTLPHPMVRVLLSEQLYRAWAILTNHPYHRA</sequence>
<proteinExistence type="inferred from homology"/>
<organism>
    <name type="scientific">Bordetella avium (strain 197N)</name>
    <dbReference type="NCBI Taxonomy" id="360910"/>
    <lineage>
        <taxon>Bacteria</taxon>
        <taxon>Pseudomonadati</taxon>
        <taxon>Pseudomonadota</taxon>
        <taxon>Betaproteobacteria</taxon>
        <taxon>Burkholderiales</taxon>
        <taxon>Alcaligenaceae</taxon>
        <taxon>Bordetella</taxon>
    </lineage>
</organism>
<dbReference type="EC" id="2.1.1.177" evidence="1"/>
<dbReference type="EMBL" id="AM167904">
    <property type="protein sequence ID" value="CAJ49822.1"/>
    <property type="molecule type" value="Genomic_DNA"/>
</dbReference>
<dbReference type="RefSeq" id="WP_012417874.1">
    <property type="nucleotide sequence ID" value="NC_010645.1"/>
</dbReference>
<dbReference type="SMR" id="Q2KYV4"/>
<dbReference type="STRING" id="360910.BAV2212"/>
<dbReference type="GeneID" id="92934727"/>
<dbReference type="KEGG" id="bav:BAV2212"/>
<dbReference type="eggNOG" id="COG1576">
    <property type="taxonomic scope" value="Bacteria"/>
</dbReference>
<dbReference type="HOGENOM" id="CLU_100552_1_0_4"/>
<dbReference type="OrthoDB" id="9806643at2"/>
<dbReference type="Proteomes" id="UP000001977">
    <property type="component" value="Chromosome"/>
</dbReference>
<dbReference type="GO" id="GO:0005737">
    <property type="term" value="C:cytoplasm"/>
    <property type="evidence" value="ECO:0007669"/>
    <property type="project" value="UniProtKB-SubCell"/>
</dbReference>
<dbReference type="GO" id="GO:0070038">
    <property type="term" value="F:rRNA (pseudouridine-N3-)-methyltransferase activity"/>
    <property type="evidence" value="ECO:0007669"/>
    <property type="project" value="UniProtKB-UniRule"/>
</dbReference>
<dbReference type="CDD" id="cd18081">
    <property type="entry name" value="RlmH-like"/>
    <property type="match status" value="1"/>
</dbReference>
<dbReference type="Gene3D" id="3.40.1280.10">
    <property type="match status" value="1"/>
</dbReference>
<dbReference type="HAMAP" id="MF_00658">
    <property type="entry name" value="23SrRNA_methyltr_H"/>
    <property type="match status" value="1"/>
</dbReference>
<dbReference type="InterPro" id="IPR029028">
    <property type="entry name" value="Alpha/beta_knot_MTases"/>
</dbReference>
<dbReference type="InterPro" id="IPR003742">
    <property type="entry name" value="RlmH-like"/>
</dbReference>
<dbReference type="InterPro" id="IPR029026">
    <property type="entry name" value="tRNA_m1G_MTases_N"/>
</dbReference>
<dbReference type="NCBIfam" id="NF000986">
    <property type="entry name" value="PRK00103.1-4"/>
    <property type="match status" value="1"/>
</dbReference>
<dbReference type="PANTHER" id="PTHR33603">
    <property type="entry name" value="METHYLTRANSFERASE"/>
    <property type="match status" value="1"/>
</dbReference>
<dbReference type="PANTHER" id="PTHR33603:SF1">
    <property type="entry name" value="RIBOSOMAL RNA LARGE SUBUNIT METHYLTRANSFERASE H"/>
    <property type="match status" value="1"/>
</dbReference>
<dbReference type="Pfam" id="PF02590">
    <property type="entry name" value="SPOUT_MTase"/>
    <property type="match status" value="1"/>
</dbReference>
<dbReference type="PIRSF" id="PIRSF004505">
    <property type="entry name" value="MT_bac"/>
    <property type="match status" value="1"/>
</dbReference>
<dbReference type="SUPFAM" id="SSF75217">
    <property type="entry name" value="alpha/beta knot"/>
    <property type="match status" value="1"/>
</dbReference>
<reference key="1">
    <citation type="journal article" date="2006" name="J. Bacteriol.">
        <title>Comparison of the genome sequence of the poultry pathogen Bordetella avium with those of B. bronchiseptica, B. pertussis, and B. parapertussis reveals extensive diversity in surface structures associated with host interaction.</title>
        <authorList>
            <person name="Sebaihia M."/>
            <person name="Preston A."/>
            <person name="Maskell D.J."/>
            <person name="Kuzmiak H."/>
            <person name="Connell T.D."/>
            <person name="King N.D."/>
            <person name="Orndorff P.E."/>
            <person name="Miyamoto D.M."/>
            <person name="Thomson N.R."/>
            <person name="Harris D."/>
            <person name="Goble A."/>
            <person name="Lord A."/>
            <person name="Murphy L."/>
            <person name="Quail M.A."/>
            <person name="Rutter S."/>
            <person name="Squares R."/>
            <person name="Squares S."/>
            <person name="Woodward J."/>
            <person name="Parkhill J."/>
            <person name="Temple L.M."/>
        </authorList>
    </citation>
    <scope>NUCLEOTIDE SEQUENCE [LARGE SCALE GENOMIC DNA]</scope>
    <source>
        <strain>197N</strain>
    </source>
</reference>
<gene>
    <name evidence="1" type="primary">rlmH</name>
    <name type="ordered locus">BAV2212</name>
</gene>
<evidence type="ECO:0000255" key="1">
    <source>
        <dbReference type="HAMAP-Rule" id="MF_00658"/>
    </source>
</evidence>
<comment type="function">
    <text evidence="1">Specifically methylates the pseudouridine at position 1915 (m3Psi1915) in 23S rRNA.</text>
</comment>
<comment type="catalytic activity">
    <reaction evidence="1">
        <text>pseudouridine(1915) in 23S rRNA + S-adenosyl-L-methionine = N(3)-methylpseudouridine(1915) in 23S rRNA + S-adenosyl-L-homocysteine + H(+)</text>
        <dbReference type="Rhea" id="RHEA:42752"/>
        <dbReference type="Rhea" id="RHEA-COMP:10221"/>
        <dbReference type="Rhea" id="RHEA-COMP:10222"/>
        <dbReference type="ChEBI" id="CHEBI:15378"/>
        <dbReference type="ChEBI" id="CHEBI:57856"/>
        <dbReference type="ChEBI" id="CHEBI:59789"/>
        <dbReference type="ChEBI" id="CHEBI:65314"/>
        <dbReference type="ChEBI" id="CHEBI:74486"/>
        <dbReference type="EC" id="2.1.1.177"/>
    </reaction>
</comment>
<comment type="subunit">
    <text evidence="1">Homodimer.</text>
</comment>
<comment type="subcellular location">
    <subcellularLocation>
        <location evidence="1">Cytoplasm</location>
    </subcellularLocation>
</comment>
<comment type="similarity">
    <text evidence="1">Belongs to the RNA methyltransferase RlmH family.</text>
</comment>
<protein>
    <recommendedName>
        <fullName evidence="1">Ribosomal RNA large subunit methyltransferase H</fullName>
        <ecNumber evidence="1">2.1.1.177</ecNumber>
    </recommendedName>
    <alternativeName>
        <fullName evidence="1">23S rRNA (pseudouridine1915-N3)-methyltransferase</fullName>
    </alternativeName>
    <alternativeName>
        <fullName evidence="1">23S rRNA m3Psi1915 methyltransferase</fullName>
    </alternativeName>
    <alternativeName>
        <fullName evidence="1">rRNA (pseudouridine-N3-)-methyltransferase RlmH</fullName>
    </alternativeName>
</protein>
<keyword id="KW-0963">Cytoplasm</keyword>
<keyword id="KW-0489">Methyltransferase</keyword>
<keyword id="KW-1185">Reference proteome</keyword>
<keyword id="KW-0698">rRNA processing</keyword>
<keyword id="KW-0949">S-adenosyl-L-methionine</keyword>
<keyword id="KW-0808">Transferase</keyword>
<name>RLMH_BORA1</name>